<dbReference type="EC" id="6.3.2.6" evidence="1"/>
<dbReference type="EMBL" id="AM743169">
    <property type="protein sequence ID" value="CAQ47703.1"/>
    <property type="molecule type" value="Genomic_DNA"/>
</dbReference>
<dbReference type="SMR" id="B2FKM0"/>
<dbReference type="EnsemblBacteria" id="CAQ47703">
    <property type="protein sequence ID" value="CAQ47703"/>
    <property type="gene ID" value="Smlt4318"/>
</dbReference>
<dbReference type="KEGG" id="sml:Smlt4318"/>
<dbReference type="eggNOG" id="COG0152">
    <property type="taxonomic scope" value="Bacteria"/>
</dbReference>
<dbReference type="HOGENOM" id="CLU_045637_0_0_6"/>
<dbReference type="UniPathway" id="UPA00074">
    <property type="reaction ID" value="UER00131"/>
</dbReference>
<dbReference type="Proteomes" id="UP000008840">
    <property type="component" value="Chromosome"/>
</dbReference>
<dbReference type="GO" id="GO:0005737">
    <property type="term" value="C:cytoplasm"/>
    <property type="evidence" value="ECO:0007669"/>
    <property type="project" value="TreeGrafter"/>
</dbReference>
<dbReference type="GO" id="GO:0005524">
    <property type="term" value="F:ATP binding"/>
    <property type="evidence" value="ECO:0007669"/>
    <property type="project" value="UniProtKB-KW"/>
</dbReference>
<dbReference type="GO" id="GO:0004639">
    <property type="term" value="F:phosphoribosylaminoimidazolesuccinocarboxamide synthase activity"/>
    <property type="evidence" value="ECO:0007669"/>
    <property type="project" value="UniProtKB-UniRule"/>
</dbReference>
<dbReference type="GO" id="GO:0006189">
    <property type="term" value="P:'de novo' IMP biosynthetic process"/>
    <property type="evidence" value="ECO:0007669"/>
    <property type="project" value="UniProtKB-UniRule"/>
</dbReference>
<dbReference type="CDD" id="cd01414">
    <property type="entry name" value="SAICAR_synt_Sc"/>
    <property type="match status" value="1"/>
</dbReference>
<dbReference type="FunFam" id="3.30.200.20:FF:000365">
    <property type="entry name" value="Phosphoribosylaminoimidazole-succinocarboxamide synthase"/>
    <property type="match status" value="1"/>
</dbReference>
<dbReference type="FunFam" id="3.30.470.20:FF:000015">
    <property type="entry name" value="Phosphoribosylaminoimidazole-succinocarboxamide synthase"/>
    <property type="match status" value="1"/>
</dbReference>
<dbReference type="Gene3D" id="3.30.470.20">
    <property type="entry name" value="ATP-grasp fold, B domain"/>
    <property type="match status" value="1"/>
</dbReference>
<dbReference type="Gene3D" id="3.30.200.20">
    <property type="entry name" value="Phosphorylase Kinase, domain 1"/>
    <property type="match status" value="1"/>
</dbReference>
<dbReference type="HAMAP" id="MF_00137">
    <property type="entry name" value="SAICAR_synth"/>
    <property type="match status" value="1"/>
</dbReference>
<dbReference type="InterPro" id="IPR028923">
    <property type="entry name" value="SAICAR_synt/ADE2_N"/>
</dbReference>
<dbReference type="InterPro" id="IPR001636">
    <property type="entry name" value="SAICAR_synth"/>
</dbReference>
<dbReference type="InterPro" id="IPR018236">
    <property type="entry name" value="SAICAR_synthetase_CS"/>
</dbReference>
<dbReference type="NCBIfam" id="NF010568">
    <property type="entry name" value="PRK13961.1"/>
    <property type="match status" value="1"/>
</dbReference>
<dbReference type="NCBIfam" id="TIGR00081">
    <property type="entry name" value="purC"/>
    <property type="match status" value="1"/>
</dbReference>
<dbReference type="PANTHER" id="PTHR43700">
    <property type="entry name" value="PHOSPHORIBOSYLAMINOIMIDAZOLE-SUCCINOCARBOXAMIDE SYNTHASE"/>
    <property type="match status" value="1"/>
</dbReference>
<dbReference type="PANTHER" id="PTHR43700:SF1">
    <property type="entry name" value="PHOSPHORIBOSYLAMINOIMIDAZOLE-SUCCINOCARBOXAMIDE SYNTHASE"/>
    <property type="match status" value="1"/>
</dbReference>
<dbReference type="Pfam" id="PF01259">
    <property type="entry name" value="SAICAR_synt"/>
    <property type="match status" value="1"/>
</dbReference>
<dbReference type="SUPFAM" id="SSF56104">
    <property type="entry name" value="SAICAR synthase-like"/>
    <property type="match status" value="1"/>
</dbReference>
<dbReference type="PROSITE" id="PS01057">
    <property type="entry name" value="SAICAR_SYNTHETASE_1"/>
    <property type="match status" value="1"/>
</dbReference>
<dbReference type="PROSITE" id="PS01058">
    <property type="entry name" value="SAICAR_SYNTHETASE_2"/>
    <property type="match status" value="1"/>
</dbReference>
<feature type="chain" id="PRO_1000117857" description="Phosphoribosylaminoimidazole-succinocarboxamide synthase">
    <location>
        <begin position="1"/>
        <end position="310"/>
    </location>
</feature>
<name>PUR7_STRMK</name>
<keyword id="KW-0067">ATP-binding</keyword>
<keyword id="KW-0436">Ligase</keyword>
<keyword id="KW-0547">Nucleotide-binding</keyword>
<keyword id="KW-0658">Purine biosynthesis</keyword>
<keyword id="KW-1185">Reference proteome</keyword>
<comment type="catalytic activity">
    <reaction evidence="1">
        <text>5-amino-1-(5-phospho-D-ribosyl)imidazole-4-carboxylate + L-aspartate + ATP = (2S)-2-[5-amino-1-(5-phospho-beta-D-ribosyl)imidazole-4-carboxamido]succinate + ADP + phosphate + 2 H(+)</text>
        <dbReference type="Rhea" id="RHEA:22628"/>
        <dbReference type="ChEBI" id="CHEBI:15378"/>
        <dbReference type="ChEBI" id="CHEBI:29991"/>
        <dbReference type="ChEBI" id="CHEBI:30616"/>
        <dbReference type="ChEBI" id="CHEBI:43474"/>
        <dbReference type="ChEBI" id="CHEBI:58443"/>
        <dbReference type="ChEBI" id="CHEBI:77657"/>
        <dbReference type="ChEBI" id="CHEBI:456216"/>
        <dbReference type="EC" id="6.3.2.6"/>
    </reaction>
</comment>
<comment type="pathway">
    <text evidence="1">Purine metabolism; IMP biosynthesis via de novo pathway; 5-amino-1-(5-phospho-D-ribosyl)imidazole-4-carboxamide from 5-amino-1-(5-phospho-D-ribosyl)imidazole-4-carboxylate: step 1/2.</text>
</comment>
<comment type="similarity">
    <text evidence="1">Belongs to the SAICAR synthetase family.</text>
</comment>
<sequence>MPVPTTLLQSDLPGLPLRHRGKVRDVFDIPRERLPAGTPPGEYLLMVATDRLSAFDVVLPDPIPGKGEMLCQVSNFWFAKTAHLMPNHLTGIDVASVLPEGVDPALYARRAVVTRKLKPVPVEAIARGYLIGSGWKDYQRTGKVSGIDLPDGLRQAEQLPEPIFTPSTKAAVGDHDENIDFDAMVKQVGAELAERVRDATLRIYKFAADYARERGIILADTKFEFGTDADGRLYIMDEMLTPDSSRYWPADEYEVGTSPPSYDKQFVRDYLETLDWGKTAPGPTIPAEIIERTRAKYAEALQRLAGISVD</sequence>
<evidence type="ECO:0000255" key="1">
    <source>
        <dbReference type="HAMAP-Rule" id="MF_00137"/>
    </source>
</evidence>
<protein>
    <recommendedName>
        <fullName evidence="1">Phosphoribosylaminoimidazole-succinocarboxamide synthase</fullName>
        <ecNumber evidence="1">6.3.2.6</ecNumber>
    </recommendedName>
    <alternativeName>
        <fullName evidence="1">SAICAR synthetase</fullName>
    </alternativeName>
</protein>
<gene>
    <name evidence="1" type="primary">purC</name>
    <name type="ordered locus">Smlt4318</name>
</gene>
<reference key="1">
    <citation type="journal article" date="2008" name="Genome Biol.">
        <title>The complete genome, comparative and functional analysis of Stenotrophomonas maltophilia reveals an organism heavily shielded by drug resistance determinants.</title>
        <authorList>
            <person name="Crossman L.C."/>
            <person name="Gould V.C."/>
            <person name="Dow J.M."/>
            <person name="Vernikos G.S."/>
            <person name="Okazaki A."/>
            <person name="Sebaihia M."/>
            <person name="Saunders D."/>
            <person name="Arrowsmith C."/>
            <person name="Carver T."/>
            <person name="Peters N."/>
            <person name="Adlem E."/>
            <person name="Kerhornou A."/>
            <person name="Lord A."/>
            <person name="Murphy L."/>
            <person name="Seeger K."/>
            <person name="Squares R."/>
            <person name="Rutter S."/>
            <person name="Quail M.A."/>
            <person name="Rajandream M.A."/>
            <person name="Harris D."/>
            <person name="Churcher C."/>
            <person name="Bentley S.D."/>
            <person name="Parkhill J."/>
            <person name="Thomson N.R."/>
            <person name="Avison M.B."/>
        </authorList>
    </citation>
    <scope>NUCLEOTIDE SEQUENCE [LARGE SCALE GENOMIC DNA]</scope>
    <source>
        <strain>K279a</strain>
    </source>
</reference>
<organism>
    <name type="scientific">Stenotrophomonas maltophilia (strain K279a)</name>
    <dbReference type="NCBI Taxonomy" id="522373"/>
    <lineage>
        <taxon>Bacteria</taxon>
        <taxon>Pseudomonadati</taxon>
        <taxon>Pseudomonadota</taxon>
        <taxon>Gammaproteobacteria</taxon>
        <taxon>Lysobacterales</taxon>
        <taxon>Lysobacteraceae</taxon>
        <taxon>Stenotrophomonas</taxon>
        <taxon>Stenotrophomonas maltophilia group</taxon>
    </lineage>
</organism>
<proteinExistence type="inferred from homology"/>
<accession>B2FKM0</accession>